<gene>
    <name type="primary">pi</name>
</gene>
<sequence length="143" mass="15471">MREFRRVRRVRFAACALVAAATGITLAAGPASADIPIGQKMTGKMTYYTDKGYGACGTPIDASSQDLVAIPAAWWTTPNPNNDPLCRGVSVEVSYNGRTIRVPVRDKCPSCDRTHIDLSQAAFAKLAPLDRGVVNGITWKFVR</sequence>
<organism>
    <name type="scientific">Streptomyces mobaraensis</name>
    <name type="common">Streptoverticillium mobaraense</name>
    <dbReference type="NCBI Taxonomy" id="35621"/>
    <lineage>
        <taxon>Bacteria</taxon>
        <taxon>Bacillati</taxon>
        <taxon>Actinomycetota</taxon>
        <taxon>Actinomycetes</taxon>
        <taxon>Kitasatosporales</taxon>
        <taxon>Streptomycetaceae</taxon>
        <taxon>Streptomyces</taxon>
    </lineage>
</organism>
<evidence type="ECO:0000269" key="1">
    <source>
    </source>
</evidence>
<evidence type="ECO:0000303" key="2">
    <source>
    </source>
</evidence>
<evidence type="ECO:0000305" key="3"/>
<evidence type="ECO:0007829" key="4">
    <source>
        <dbReference type="PDB" id="5NTB"/>
    </source>
</evidence>
<keyword id="KW-0002">3D-structure</keyword>
<keyword id="KW-0903">Direct protein sequencing</keyword>
<keyword id="KW-0646">Protease inhibitor</keyword>
<keyword id="KW-0964">Secreted</keyword>
<keyword id="KW-0722">Serine protease inhibitor</keyword>
<keyword id="KW-0732">Signal</keyword>
<keyword id="KW-0789">Thiol protease inhibitor</keyword>
<accession>P86242</accession>
<accession>N1NV49</accession>
<dbReference type="EMBL" id="HF968450">
    <property type="protein sequence ID" value="CCW72532.1"/>
    <property type="molecule type" value="Genomic_DNA"/>
</dbReference>
<dbReference type="RefSeq" id="WP_004951535.1">
    <property type="nucleotide sequence ID" value="NZ_JBFADJ010000027.1"/>
</dbReference>
<dbReference type="PDB" id="5NTB">
    <property type="method" value="X-ray"/>
    <property type="resolution" value="1.50 A"/>
    <property type="chains" value="A/B=34-143"/>
</dbReference>
<dbReference type="PDB" id="6GMG">
    <property type="method" value="X-ray"/>
    <property type="resolution" value="2.25 A"/>
    <property type="chains" value="C/D=34-42"/>
</dbReference>
<dbReference type="PDBsum" id="5NTB"/>
<dbReference type="PDBsum" id="6GMG"/>
<dbReference type="SMR" id="P86242"/>
<dbReference type="GO" id="GO:0005615">
    <property type="term" value="C:extracellular space"/>
    <property type="evidence" value="ECO:0000314"/>
    <property type="project" value="UniProtKB"/>
</dbReference>
<dbReference type="GO" id="GO:0004869">
    <property type="term" value="F:cysteine-type endopeptidase inhibitor activity"/>
    <property type="evidence" value="ECO:0000314"/>
    <property type="project" value="UniProtKB"/>
</dbReference>
<dbReference type="GO" id="GO:0004867">
    <property type="term" value="F:serine-type endopeptidase inhibitor activity"/>
    <property type="evidence" value="ECO:0000314"/>
    <property type="project" value="UniProtKB"/>
</dbReference>
<dbReference type="GO" id="GO:0010466">
    <property type="term" value="P:negative regulation of peptidase activity"/>
    <property type="evidence" value="ECO:0000314"/>
    <property type="project" value="UniProtKB"/>
</dbReference>
<dbReference type="CDD" id="cd22273">
    <property type="entry name" value="DPBB_SPI-like"/>
    <property type="match status" value="1"/>
</dbReference>
<dbReference type="Gene3D" id="2.40.40.10">
    <property type="entry name" value="RlpA-like domain"/>
    <property type="match status" value="1"/>
</dbReference>
<dbReference type="InterPro" id="IPR051477">
    <property type="entry name" value="Expansin_CellWall"/>
</dbReference>
<dbReference type="InterPro" id="IPR048197">
    <property type="entry name" value="Papain_inhib"/>
</dbReference>
<dbReference type="InterPro" id="IPR009009">
    <property type="entry name" value="RlpA-like_DPBB"/>
</dbReference>
<dbReference type="InterPro" id="IPR036908">
    <property type="entry name" value="RlpA-like_sf"/>
</dbReference>
<dbReference type="NCBIfam" id="NF041659">
    <property type="entry name" value="Papain_Inhib"/>
    <property type="match status" value="1"/>
</dbReference>
<dbReference type="PANTHER" id="PTHR31836">
    <property type="match status" value="1"/>
</dbReference>
<dbReference type="PANTHER" id="PTHR31836:SF28">
    <property type="entry name" value="SRCR DOMAIN-CONTAINING PROTEIN-RELATED"/>
    <property type="match status" value="1"/>
</dbReference>
<dbReference type="Pfam" id="PF03330">
    <property type="entry name" value="DPBB_1"/>
    <property type="match status" value="1"/>
</dbReference>
<dbReference type="SUPFAM" id="SSF50685">
    <property type="entry name" value="Barwin-like endoglucanases"/>
    <property type="match status" value="1"/>
</dbReference>
<protein>
    <recommendedName>
        <fullName evidence="2">Papain inhibitor</fullName>
        <shortName evidence="2">SPI</shortName>
    </recommendedName>
</protein>
<proteinExistence type="evidence at protein level"/>
<reference key="1">
    <citation type="submission" date="2013-04" db="EMBL/GenBank/DDBJ databases">
        <title>Gene structure of the papain inhibitor from Streptomyces mobaraensis.</title>
        <authorList>
            <person name="Zindel S."/>
            <person name="Froels S."/>
            <person name="Kletzin A."/>
            <person name="Dehm D."/>
            <person name="Ehret V."/>
            <person name="Ehret M."/>
            <person name="Pfeifer F."/>
            <person name="Fuchsbauer H.L."/>
        </authorList>
    </citation>
    <scope>NUCLEOTIDE SEQUENCE [GENOMIC DNA]</scope>
    <source>
        <strain>ATCC 29032 / CBS 199.75 / DSM 40847 / NBRC 13819 / NCIMB 11159 / NRRL B-3729 / VKM Ac-928</strain>
    </source>
</reference>
<reference evidence="3" key="2">
    <citation type="journal article" date="2011" name="J. Microbiol. Biotechnol.">
        <title>A novel transglutaminase substrate from Streptomyces mobaraensis inhibiting papain-like cysteine proteases.</title>
        <authorList>
            <person name="Sarafeddinov A."/>
            <person name="Arif A."/>
            <person name="Peters A."/>
            <person name="Fuchsbauer H.L."/>
        </authorList>
    </citation>
    <scope>PROTEIN SEQUENCE OF 34-53</scope>
    <scope>FUNCTION</scope>
    <scope>BIOPHYSICOCHEMICAL PROPERTIES</scope>
    <scope>SUBUNIT</scope>
    <scope>SUBCELLULAR LOCATION</scope>
    <scope>INDUCTION</scope>
    <source>
        <strain evidence="1">ATCC 29032 / CBS 199.75 / DSM 40847 / NBRC 13819 / NCIMB 11159 / NRRL B-3729 / VKM Ac-928</strain>
    </source>
</reference>
<feature type="signal peptide" evidence="1">
    <location>
        <begin position="1"/>
        <end position="33"/>
    </location>
</feature>
<feature type="chain" id="PRO_0000413032" description="Papain inhibitor">
    <location>
        <begin position="34"/>
        <end position="143"/>
    </location>
</feature>
<feature type="strand" evidence="4">
    <location>
        <begin position="41"/>
        <end position="48"/>
    </location>
</feature>
<feature type="strand" evidence="4">
    <location>
        <begin position="51"/>
        <end position="53"/>
    </location>
</feature>
<feature type="strand" evidence="4">
    <location>
        <begin position="57"/>
        <end position="61"/>
    </location>
</feature>
<feature type="turn" evidence="4">
    <location>
        <begin position="62"/>
        <end position="64"/>
    </location>
</feature>
<feature type="strand" evidence="4">
    <location>
        <begin position="68"/>
        <end position="71"/>
    </location>
</feature>
<feature type="helix" evidence="4">
    <location>
        <begin position="72"/>
        <end position="74"/>
    </location>
</feature>
<feature type="strand" evidence="4">
    <location>
        <begin position="77"/>
        <end position="79"/>
    </location>
</feature>
<feature type="helix" evidence="4">
    <location>
        <begin position="80"/>
        <end position="82"/>
    </location>
</feature>
<feature type="helix" evidence="4">
    <location>
        <begin position="84"/>
        <end position="86"/>
    </location>
</feature>
<feature type="strand" evidence="4">
    <location>
        <begin position="90"/>
        <end position="95"/>
    </location>
</feature>
<feature type="strand" evidence="4">
    <location>
        <begin position="98"/>
        <end position="108"/>
    </location>
</feature>
<feature type="strand" evidence="4">
    <location>
        <begin position="115"/>
        <end position="119"/>
    </location>
</feature>
<feature type="helix" evidence="4">
    <location>
        <begin position="120"/>
        <end position="123"/>
    </location>
</feature>
<feature type="turn" evidence="4">
    <location>
        <begin position="124"/>
        <end position="126"/>
    </location>
</feature>
<feature type="helix" evidence="4">
    <location>
        <begin position="129"/>
        <end position="131"/>
    </location>
</feature>
<feature type="strand" evidence="4">
    <location>
        <begin position="134"/>
        <end position="142"/>
    </location>
</feature>
<comment type="function">
    <text evidence="1">Stress protein produced under hyperthermal stress conditions. Serves as a glutamine and lysine donor substrate for transglutaminase. Inhibits the cysteine proteases papain and bromelain as well as the bovine serine protease trypsin. Has hardly any or no effect on subtilisin, bovine chymotrypsin, proteinase K from T.album, transglutaminase-activating metalloproteinase (TAMEP) from S.mobaraensis, dispase from B.polymyxa, thermolysin from B.thermoproteolyticus or collagenase from C.histolyticum.</text>
</comment>
<comment type="biophysicochemical properties">
    <temperatureDependence>
        <text evidence="1">Thermostable. Activity is stable between 20-40 degrees Celsius. Retains about 70% activity after 60 minutes at 100 degrees Celsius.</text>
    </temperatureDependence>
</comment>
<comment type="subunit">
    <text evidence="1">Monomer.</text>
</comment>
<comment type="subcellular location">
    <subcellularLocation>
        <location evidence="1">Secreted</location>
    </subcellularLocation>
</comment>
<comment type="induction">
    <text evidence="1">By heat stress.</text>
</comment>
<name>PAPI_STRMB</name>